<accession>Q9HXH8</accession>
<evidence type="ECO:0000255" key="1">
    <source>
        <dbReference type="HAMAP-Rule" id="MF_00113"/>
    </source>
</evidence>
<proteinExistence type="inferred from homology"/>
<gene>
    <name evidence="1" type="primary">queA</name>
    <name type="ordered locus">PA3824</name>
</gene>
<reference key="1">
    <citation type="journal article" date="2000" name="Nature">
        <title>Complete genome sequence of Pseudomonas aeruginosa PAO1, an opportunistic pathogen.</title>
        <authorList>
            <person name="Stover C.K."/>
            <person name="Pham X.-Q.T."/>
            <person name="Erwin A.L."/>
            <person name="Mizoguchi S.D."/>
            <person name="Warrener P."/>
            <person name="Hickey M.J."/>
            <person name="Brinkman F.S.L."/>
            <person name="Hufnagle W.O."/>
            <person name="Kowalik D.J."/>
            <person name="Lagrou M."/>
            <person name="Garber R.L."/>
            <person name="Goltry L."/>
            <person name="Tolentino E."/>
            <person name="Westbrock-Wadman S."/>
            <person name="Yuan Y."/>
            <person name="Brody L.L."/>
            <person name="Coulter S.N."/>
            <person name="Folger K.R."/>
            <person name="Kas A."/>
            <person name="Larbig K."/>
            <person name="Lim R.M."/>
            <person name="Smith K.A."/>
            <person name="Spencer D.H."/>
            <person name="Wong G.K.-S."/>
            <person name="Wu Z."/>
            <person name="Paulsen I.T."/>
            <person name="Reizer J."/>
            <person name="Saier M.H. Jr."/>
            <person name="Hancock R.E.W."/>
            <person name="Lory S."/>
            <person name="Olson M.V."/>
        </authorList>
    </citation>
    <scope>NUCLEOTIDE SEQUENCE [LARGE SCALE GENOMIC DNA]</scope>
    <source>
        <strain>ATCC 15692 / DSM 22644 / CIP 104116 / JCM 14847 / LMG 12228 / 1C / PRS 101 / PAO1</strain>
    </source>
</reference>
<feature type="chain" id="PRO_0000165425" description="S-adenosylmethionine:tRNA ribosyltransferase-isomerase">
    <location>
        <begin position="1"/>
        <end position="347"/>
    </location>
</feature>
<dbReference type="EC" id="2.4.99.17" evidence="1"/>
<dbReference type="EMBL" id="AE004091">
    <property type="protein sequence ID" value="AAG07211.1"/>
    <property type="molecule type" value="Genomic_DNA"/>
</dbReference>
<dbReference type="PIR" id="A83170">
    <property type="entry name" value="A83170"/>
</dbReference>
<dbReference type="RefSeq" id="NP_252513.1">
    <property type="nucleotide sequence ID" value="NC_002516.2"/>
</dbReference>
<dbReference type="RefSeq" id="WP_003113798.1">
    <property type="nucleotide sequence ID" value="NZ_QZGE01000001.1"/>
</dbReference>
<dbReference type="SMR" id="Q9HXH8"/>
<dbReference type="FunCoup" id="Q9HXH8">
    <property type="interactions" value="523"/>
</dbReference>
<dbReference type="STRING" id="208964.PA3824"/>
<dbReference type="PaxDb" id="208964-PA3824"/>
<dbReference type="GeneID" id="879887"/>
<dbReference type="KEGG" id="pae:PA3824"/>
<dbReference type="PATRIC" id="fig|208964.12.peg.4003"/>
<dbReference type="PseudoCAP" id="PA3824"/>
<dbReference type="HOGENOM" id="CLU_039110_1_0_6"/>
<dbReference type="InParanoid" id="Q9HXH8"/>
<dbReference type="OrthoDB" id="9805933at2"/>
<dbReference type="PhylomeDB" id="Q9HXH8"/>
<dbReference type="BioCyc" id="PAER208964:G1FZ6-3895-MONOMER"/>
<dbReference type="UniPathway" id="UPA00392"/>
<dbReference type="Proteomes" id="UP000002438">
    <property type="component" value="Chromosome"/>
</dbReference>
<dbReference type="GO" id="GO:0005737">
    <property type="term" value="C:cytoplasm"/>
    <property type="evidence" value="ECO:0007669"/>
    <property type="project" value="UniProtKB-SubCell"/>
</dbReference>
<dbReference type="GO" id="GO:0051075">
    <property type="term" value="F:S-adenosylmethionine:tRNA ribosyltransferase-isomerase activity"/>
    <property type="evidence" value="ECO:0000318"/>
    <property type="project" value="GO_Central"/>
</dbReference>
<dbReference type="GO" id="GO:0008616">
    <property type="term" value="P:queuosine biosynthetic process"/>
    <property type="evidence" value="ECO:0000318"/>
    <property type="project" value="GO_Central"/>
</dbReference>
<dbReference type="GO" id="GO:0002099">
    <property type="term" value="P:tRNA wobble guanine modification"/>
    <property type="evidence" value="ECO:0000318"/>
    <property type="project" value="GO_Central"/>
</dbReference>
<dbReference type="FunFam" id="2.40.10.240:FF:000001">
    <property type="entry name" value="S-adenosylmethionine:tRNA ribosyltransferase-isomerase"/>
    <property type="match status" value="1"/>
</dbReference>
<dbReference type="FunFam" id="3.40.1780.10:FF:000001">
    <property type="entry name" value="S-adenosylmethionine:tRNA ribosyltransferase-isomerase"/>
    <property type="match status" value="1"/>
</dbReference>
<dbReference type="Gene3D" id="2.40.10.240">
    <property type="entry name" value="QueA-like"/>
    <property type="match status" value="1"/>
</dbReference>
<dbReference type="Gene3D" id="3.40.1780.10">
    <property type="entry name" value="QueA-like"/>
    <property type="match status" value="1"/>
</dbReference>
<dbReference type="HAMAP" id="MF_00113">
    <property type="entry name" value="QueA"/>
    <property type="match status" value="1"/>
</dbReference>
<dbReference type="InterPro" id="IPR003699">
    <property type="entry name" value="QueA"/>
</dbReference>
<dbReference type="InterPro" id="IPR042118">
    <property type="entry name" value="QueA_dom1"/>
</dbReference>
<dbReference type="InterPro" id="IPR042119">
    <property type="entry name" value="QueA_dom2"/>
</dbReference>
<dbReference type="InterPro" id="IPR036100">
    <property type="entry name" value="QueA_sf"/>
</dbReference>
<dbReference type="NCBIfam" id="NF001140">
    <property type="entry name" value="PRK00147.1"/>
    <property type="match status" value="1"/>
</dbReference>
<dbReference type="NCBIfam" id="TIGR00113">
    <property type="entry name" value="queA"/>
    <property type="match status" value="1"/>
</dbReference>
<dbReference type="PANTHER" id="PTHR30307">
    <property type="entry name" value="S-ADENOSYLMETHIONINE:TRNA RIBOSYLTRANSFERASE-ISOMERASE"/>
    <property type="match status" value="1"/>
</dbReference>
<dbReference type="PANTHER" id="PTHR30307:SF0">
    <property type="entry name" value="S-ADENOSYLMETHIONINE:TRNA RIBOSYLTRANSFERASE-ISOMERASE"/>
    <property type="match status" value="1"/>
</dbReference>
<dbReference type="Pfam" id="PF02547">
    <property type="entry name" value="Queuosine_synth"/>
    <property type="match status" value="1"/>
</dbReference>
<dbReference type="SUPFAM" id="SSF111337">
    <property type="entry name" value="QueA-like"/>
    <property type="match status" value="1"/>
</dbReference>
<comment type="function">
    <text evidence="1">Transfers and isomerizes the ribose moiety from AdoMet to the 7-aminomethyl group of 7-deazaguanine (preQ1-tRNA) to give epoxyqueuosine (oQ-tRNA).</text>
</comment>
<comment type="catalytic activity">
    <reaction evidence="1">
        <text>7-aminomethyl-7-carbaguanosine(34) in tRNA + S-adenosyl-L-methionine = epoxyqueuosine(34) in tRNA + adenine + L-methionine + 2 H(+)</text>
        <dbReference type="Rhea" id="RHEA:32155"/>
        <dbReference type="Rhea" id="RHEA-COMP:10342"/>
        <dbReference type="Rhea" id="RHEA-COMP:18582"/>
        <dbReference type="ChEBI" id="CHEBI:15378"/>
        <dbReference type="ChEBI" id="CHEBI:16708"/>
        <dbReference type="ChEBI" id="CHEBI:57844"/>
        <dbReference type="ChEBI" id="CHEBI:59789"/>
        <dbReference type="ChEBI" id="CHEBI:82833"/>
        <dbReference type="ChEBI" id="CHEBI:194443"/>
        <dbReference type="EC" id="2.4.99.17"/>
    </reaction>
</comment>
<comment type="pathway">
    <text evidence="1">tRNA modification; tRNA-queuosine biosynthesis.</text>
</comment>
<comment type="subunit">
    <text evidence="1">Monomer.</text>
</comment>
<comment type="subcellular location">
    <subcellularLocation>
        <location evidence="1">Cytoplasm</location>
    </subcellularLocation>
</comment>
<comment type="similarity">
    <text evidence="1">Belongs to the QueA family.</text>
</comment>
<protein>
    <recommendedName>
        <fullName evidence="1">S-adenosylmethionine:tRNA ribosyltransferase-isomerase</fullName>
        <ecNumber evidence="1">2.4.99.17</ecNumber>
    </recommendedName>
    <alternativeName>
        <fullName evidence="1">Queuosine biosynthesis protein QueA</fullName>
    </alternativeName>
</protein>
<organism>
    <name type="scientific">Pseudomonas aeruginosa (strain ATCC 15692 / DSM 22644 / CIP 104116 / JCM 14847 / LMG 12228 / 1C / PRS 101 / PAO1)</name>
    <dbReference type="NCBI Taxonomy" id="208964"/>
    <lineage>
        <taxon>Bacteria</taxon>
        <taxon>Pseudomonadati</taxon>
        <taxon>Pseudomonadota</taxon>
        <taxon>Gammaproteobacteria</taxon>
        <taxon>Pseudomonadales</taxon>
        <taxon>Pseudomonadaceae</taxon>
        <taxon>Pseudomonas</taxon>
    </lineage>
</organism>
<keyword id="KW-0963">Cytoplasm</keyword>
<keyword id="KW-0671">Queuosine biosynthesis</keyword>
<keyword id="KW-1185">Reference proteome</keyword>
<keyword id="KW-0949">S-adenosyl-L-methionine</keyword>
<keyword id="KW-0808">Transferase</keyword>
<sequence length="347" mass="38161">MRVADFHFDLPEALIARHPLPERRASRLLALDGPTGTLAHRQFADLLDYLRPGDLMVFNNTRVIPARLFGQKESGGKLEVLVERVLDQHRVLAHIRASKAPKPGTRILVEGGGSAEMLQRHDALFELAFAEPVLPLLERVGHMPLPPYIDRPDDAADRERYQTVYAQRAGAVAAPTAGLHFDEALLEAIRAKGVDTAFVTLHVGAGTFQPVRVERIEDHVMHREWLEVGQDVVDAVSVCRARGGRVVAVGTTSVRSLESAARDGELKPFSGDTDIFIYPGRPFHVVDALVTNFHLPESTLLMLVSAFAGYPETMAAYAAAVAQGYRFFSYGDAMFITRNPAPRGPED</sequence>
<name>QUEA_PSEAE</name>